<reference key="1">
    <citation type="submission" date="2008-05" db="EMBL/GenBank/DDBJ databases">
        <title>Genome sequence of Helicobacter pylori from the remote Amazon: traces of Asian ancestry of the first Americans.</title>
        <authorList>
            <person name="Kersulyte D."/>
            <person name="Kalia A."/>
            <person name="Gilman R.H."/>
            <person name="Berg D.E."/>
        </authorList>
    </citation>
    <scope>NUCLEOTIDE SEQUENCE [LARGE SCALE GENOMIC DNA]</scope>
    <source>
        <strain>Shi470</strain>
    </source>
</reference>
<organism>
    <name type="scientific">Helicobacter pylori (strain Shi470)</name>
    <dbReference type="NCBI Taxonomy" id="512562"/>
    <lineage>
        <taxon>Bacteria</taxon>
        <taxon>Pseudomonadati</taxon>
        <taxon>Campylobacterota</taxon>
        <taxon>Epsilonproteobacteria</taxon>
        <taxon>Campylobacterales</taxon>
        <taxon>Helicobacteraceae</taxon>
        <taxon>Helicobacter</taxon>
    </lineage>
</organism>
<feature type="chain" id="PRO_1000139034" description="Acyl carrier protein">
    <location>
        <begin position="1"/>
        <end position="78"/>
    </location>
</feature>
<feature type="domain" description="Carrier" evidence="2">
    <location>
        <begin position="1"/>
        <end position="76"/>
    </location>
</feature>
<feature type="modified residue" description="O-(pantetheine 4'-phosphoryl)serine" evidence="2">
    <location>
        <position position="36"/>
    </location>
</feature>
<sequence length="78" mass="8562">MALFEDIQAVIAEQLNVDAAQVTPEAEFVKDLGADSLDVVELIMALEEKFGIEIPDEQAEKIVNVGDVVKYIEDNKLA</sequence>
<proteinExistence type="inferred from homology"/>
<protein>
    <recommendedName>
        <fullName evidence="1">Acyl carrier protein</fullName>
        <shortName evidence="1">ACP</shortName>
    </recommendedName>
</protein>
<dbReference type="EMBL" id="CP001072">
    <property type="protein sequence ID" value="ACD48250.1"/>
    <property type="molecule type" value="Genomic_DNA"/>
</dbReference>
<dbReference type="RefSeq" id="WP_001163091.1">
    <property type="nucleotide sequence ID" value="NC_010698.2"/>
</dbReference>
<dbReference type="SMR" id="B2UTR8"/>
<dbReference type="GeneID" id="93236908"/>
<dbReference type="KEGG" id="hps:HPSH_04075"/>
<dbReference type="HOGENOM" id="CLU_108696_5_1_7"/>
<dbReference type="UniPathway" id="UPA00094"/>
<dbReference type="GO" id="GO:0005829">
    <property type="term" value="C:cytosol"/>
    <property type="evidence" value="ECO:0007669"/>
    <property type="project" value="TreeGrafter"/>
</dbReference>
<dbReference type="GO" id="GO:0016020">
    <property type="term" value="C:membrane"/>
    <property type="evidence" value="ECO:0007669"/>
    <property type="project" value="GOC"/>
</dbReference>
<dbReference type="GO" id="GO:0000035">
    <property type="term" value="F:acyl binding"/>
    <property type="evidence" value="ECO:0007669"/>
    <property type="project" value="TreeGrafter"/>
</dbReference>
<dbReference type="GO" id="GO:0000036">
    <property type="term" value="F:acyl carrier activity"/>
    <property type="evidence" value="ECO:0007669"/>
    <property type="project" value="UniProtKB-UniRule"/>
</dbReference>
<dbReference type="GO" id="GO:0031177">
    <property type="term" value="F:phosphopantetheine binding"/>
    <property type="evidence" value="ECO:0007669"/>
    <property type="project" value="InterPro"/>
</dbReference>
<dbReference type="GO" id="GO:0009245">
    <property type="term" value="P:lipid A biosynthetic process"/>
    <property type="evidence" value="ECO:0007669"/>
    <property type="project" value="TreeGrafter"/>
</dbReference>
<dbReference type="FunFam" id="1.10.1200.10:FF:000006">
    <property type="entry name" value="Acyl carrier protein"/>
    <property type="match status" value="1"/>
</dbReference>
<dbReference type="Gene3D" id="1.10.1200.10">
    <property type="entry name" value="ACP-like"/>
    <property type="match status" value="1"/>
</dbReference>
<dbReference type="HAMAP" id="MF_01217">
    <property type="entry name" value="Acyl_carrier"/>
    <property type="match status" value="1"/>
</dbReference>
<dbReference type="InterPro" id="IPR003231">
    <property type="entry name" value="ACP"/>
</dbReference>
<dbReference type="InterPro" id="IPR036736">
    <property type="entry name" value="ACP-like_sf"/>
</dbReference>
<dbReference type="InterPro" id="IPR020806">
    <property type="entry name" value="PKS_PP-bd"/>
</dbReference>
<dbReference type="InterPro" id="IPR009081">
    <property type="entry name" value="PP-bd_ACP"/>
</dbReference>
<dbReference type="InterPro" id="IPR006162">
    <property type="entry name" value="Ppantetheine_attach_site"/>
</dbReference>
<dbReference type="NCBIfam" id="TIGR00517">
    <property type="entry name" value="acyl_carrier"/>
    <property type="match status" value="1"/>
</dbReference>
<dbReference type="NCBIfam" id="NF002148">
    <property type="entry name" value="PRK00982.1-2"/>
    <property type="match status" value="1"/>
</dbReference>
<dbReference type="NCBIfam" id="NF002150">
    <property type="entry name" value="PRK00982.1-4"/>
    <property type="match status" value="1"/>
</dbReference>
<dbReference type="NCBIfam" id="NF002151">
    <property type="entry name" value="PRK00982.1-5"/>
    <property type="match status" value="1"/>
</dbReference>
<dbReference type="PANTHER" id="PTHR20863">
    <property type="entry name" value="ACYL CARRIER PROTEIN"/>
    <property type="match status" value="1"/>
</dbReference>
<dbReference type="PANTHER" id="PTHR20863:SF76">
    <property type="entry name" value="CARRIER DOMAIN-CONTAINING PROTEIN"/>
    <property type="match status" value="1"/>
</dbReference>
<dbReference type="Pfam" id="PF00550">
    <property type="entry name" value="PP-binding"/>
    <property type="match status" value="1"/>
</dbReference>
<dbReference type="SMART" id="SM00823">
    <property type="entry name" value="PKS_PP"/>
    <property type="match status" value="1"/>
</dbReference>
<dbReference type="SUPFAM" id="SSF47336">
    <property type="entry name" value="ACP-like"/>
    <property type="match status" value="1"/>
</dbReference>
<dbReference type="PROSITE" id="PS50075">
    <property type="entry name" value="CARRIER"/>
    <property type="match status" value="1"/>
</dbReference>
<dbReference type="PROSITE" id="PS00012">
    <property type="entry name" value="PHOSPHOPANTETHEINE"/>
    <property type="match status" value="1"/>
</dbReference>
<evidence type="ECO:0000255" key="1">
    <source>
        <dbReference type="HAMAP-Rule" id="MF_01217"/>
    </source>
</evidence>
<evidence type="ECO:0000255" key="2">
    <source>
        <dbReference type="PROSITE-ProRule" id="PRU00258"/>
    </source>
</evidence>
<gene>
    <name evidence="1" type="primary">acpP</name>
    <name type="ordered locus">HPSH_04075</name>
</gene>
<accession>B2UTR8</accession>
<name>ACP_HELPS</name>
<comment type="function">
    <text evidence="1">Carrier of the growing fatty acid chain in fatty acid biosynthesis.</text>
</comment>
<comment type="pathway">
    <text evidence="1">Lipid metabolism; fatty acid biosynthesis.</text>
</comment>
<comment type="subcellular location">
    <subcellularLocation>
        <location evidence="1">Cytoplasm</location>
    </subcellularLocation>
</comment>
<comment type="PTM">
    <text evidence="1">4'-phosphopantetheine is transferred from CoA to a specific serine of apo-ACP by AcpS. This modification is essential for activity because fatty acids are bound in thioester linkage to the sulfhydryl of the prosthetic group.</text>
</comment>
<comment type="similarity">
    <text evidence="1">Belongs to the acyl carrier protein (ACP) family.</text>
</comment>
<keyword id="KW-0963">Cytoplasm</keyword>
<keyword id="KW-0275">Fatty acid biosynthesis</keyword>
<keyword id="KW-0276">Fatty acid metabolism</keyword>
<keyword id="KW-0444">Lipid biosynthesis</keyword>
<keyword id="KW-0443">Lipid metabolism</keyword>
<keyword id="KW-0596">Phosphopantetheine</keyword>
<keyword id="KW-0597">Phosphoprotein</keyword>